<protein>
    <recommendedName>
        <fullName evidence="1">Ribosomal RNA small subunit methyltransferase A</fullName>
        <ecNumber evidence="1">2.1.1.182</ecNumber>
    </recommendedName>
    <alternativeName>
        <fullName evidence="1">16S rRNA (adenine(1518)-N(6)/adenine(1519)-N(6))-dimethyltransferase</fullName>
    </alternativeName>
    <alternativeName>
        <fullName evidence="1">16S rRNA dimethyladenosine transferase</fullName>
    </alternativeName>
    <alternativeName>
        <fullName evidence="1">16S rRNA dimethylase</fullName>
    </alternativeName>
    <alternativeName>
        <fullName evidence="1">S-adenosylmethionine-6-N', N'-adenosyl(rRNA) dimethyltransferase</fullName>
    </alternativeName>
</protein>
<dbReference type="EC" id="2.1.1.182" evidence="1"/>
<dbReference type="EMBL" id="AP006861">
    <property type="protein sequence ID" value="BAE81472.1"/>
    <property type="molecule type" value="Genomic_DNA"/>
</dbReference>
<dbReference type="SMR" id="Q253R6"/>
<dbReference type="STRING" id="264202.CF0700"/>
<dbReference type="KEGG" id="cfe:CF0700"/>
<dbReference type="eggNOG" id="COG0030">
    <property type="taxonomic scope" value="Bacteria"/>
</dbReference>
<dbReference type="HOGENOM" id="CLU_041220_0_0_0"/>
<dbReference type="Proteomes" id="UP000001260">
    <property type="component" value="Chromosome"/>
</dbReference>
<dbReference type="GO" id="GO:0005829">
    <property type="term" value="C:cytosol"/>
    <property type="evidence" value="ECO:0007669"/>
    <property type="project" value="TreeGrafter"/>
</dbReference>
<dbReference type="GO" id="GO:0052908">
    <property type="term" value="F:16S rRNA (adenine(1518)-N(6)/adenine(1519)-N(6))-dimethyltransferase activity"/>
    <property type="evidence" value="ECO:0007669"/>
    <property type="project" value="UniProtKB-EC"/>
</dbReference>
<dbReference type="GO" id="GO:0003723">
    <property type="term" value="F:RNA binding"/>
    <property type="evidence" value="ECO:0007669"/>
    <property type="project" value="UniProtKB-KW"/>
</dbReference>
<dbReference type="CDD" id="cd02440">
    <property type="entry name" value="AdoMet_MTases"/>
    <property type="match status" value="1"/>
</dbReference>
<dbReference type="Gene3D" id="1.10.8.100">
    <property type="entry name" value="Ribosomal RNA adenine dimethylase-like, domain 2"/>
    <property type="match status" value="1"/>
</dbReference>
<dbReference type="Gene3D" id="3.40.50.150">
    <property type="entry name" value="Vaccinia Virus protein VP39"/>
    <property type="match status" value="1"/>
</dbReference>
<dbReference type="HAMAP" id="MF_00607">
    <property type="entry name" value="16SrRNA_methyltr_A"/>
    <property type="match status" value="1"/>
</dbReference>
<dbReference type="InterPro" id="IPR001737">
    <property type="entry name" value="KsgA/Erm"/>
</dbReference>
<dbReference type="InterPro" id="IPR023165">
    <property type="entry name" value="rRNA_Ade_diMease-like_C"/>
</dbReference>
<dbReference type="InterPro" id="IPR020596">
    <property type="entry name" value="rRNA_Ade_Mease_Trfase_CS"/>
</dbReference>
<dbReference type="InterPro" id="IPR020598">
    <property type="entry name" value="rRNA_Ade_methylase_Trfase_N"/>
</dbReference>
<dbReference type="InterPro" id="IPR011530">
    <property type="entry name" value="rRNA_adenine_dimethylase"/>
</dbReference>
<dbReference type="InterPro" id="IPR029063">
    <property type="entry name" value="SAM-dependent_MTases_sf"/>
</dbReference>
<dbReference type="NCBIfam" id="TIGR00755">
    <property type="entry name" value="ksgA"/>
    <property type="match status" value="1"/>
</dbReference>
<dbReference type="PANTHER" id="PTHR11727">
    <property type="entry name" value="DIMETHYLADENOSINE TRANSFERASE"/>
    <property type="match status" value="1"/>
</dbReference>
<dbReference type="PANTHER" id="PTHR11727:SF7">
    <property type="entry name" value="DIMETHYLADENOSINE TRANSFERASE-RELATED"/>
    <property type="match status" value="1"/>
</dbReference>
<dbReference type="Pfam" id="PF00398">
    <property type="entry name" value="RrnaAD"/>
    <property type="match status" value="1"/>
</dbReference>
<dbReference type="SMART" id="SM00650">
    <property type="entry name" value="rADc"/>
    <property type="match status" value="1"/>
</dbReference>
<dbReference type="SUPFAM" id="SSF53335">
    <property type="entry name" value="S-adenosyl-L-methionine-dependent methyltransferases"/>
    <property type="match status" value="1"/>
</dbReference>
<dbReference type="PROSITE" id="PS01131">
    <property type="entry name" value="RRNA_A_DIMETH"/>
    <property type="match status" value="1"/>
</dbReference>
<dbReference type="PROSITE" id="PS51689">
    <property type="entry name" value="SAM_RNA_A_N6_MT"/>
    <property type="match status" value="1"/>
</dbReference>
<organism>
    <name type="scientific">Chlamydia felis (strain Fe/C-56)</name>
    <name type="common">Chlamydophila felis</name>
    <dbReference type="NCBI Taxonomy" id="264202"/>
    <lineage>
        <taxon>Bacteria</taxon>
        <taxon>Pseudomonadati</taxon>
        <taxon>Chlamydiota</taxon>
        <taxon>Chlamydiia</taxon>
        <taxon>Chlamydiales</taxon>
        <taxon>Chlamydiaceae</taxon>
        <taxon>Chlamydia/Chlamydophila group</taxon>
        <taxon>Chlamydia</taxon>
    </lineage>
</organism>
<evidence type="ECO:0000255" key="1">
    <source>
        <dbReference type="HAMAP-Rule" id="MF_00607"/>
    </source>
</evidence>
<comment type="function">
    <text evidence="1">Specifically dimethylates two adjacent adenosines (A1518 and A1519) in the loop of a conserved hairpin near the 3'-end of 16S rRNA in the 30S particle. May play a critical role in biogenesis of 30S subunits.</text>
</comment>
<comment type="catalytic activity">
    <reaction evidence="1">
        <text>adenosine(1518)/adenosine(1519) in 16S rRNA + 4 S-adenosyl-L-methionine = N(6)-dimethyladenosine(1518)/N(6)-dimethyladenosine(1519) in 16S rRNA + 4 S-adenosyl-L-homocysteine + 4 H(+)</text>
        <dbReference type="Rhea" id="RHEA:19609"/>
        <dbReference type="Rhea" id="RHEA-COMP:10232"/>
        <dbReference type="Rhea" id="RHEA-COMP:10233"/>
        <dbReference type="ChEBI" id="CHEBI:15378"/>
        <dbReference type="ChEBI" id="CHEBI:57856"/>
        <dbReference type="ChEBI" id="CHEBI:59789"/>
        <dbReference type="ChEBI" id="CHEBI:74411"/>
        <dbReference type="ChEBI" id="CHEBI:74493"/>
        <dbReference type="EC" id="2.1.1.182"/>
    </reaction>
</comment>
<comment type="subcellular location">
    <subcellularLocation>
        <location evidence="1">Cytoplasm</location>
    </subcellularLocation>
</comment>
<comment type="similarity">
    <text evidence="1">Belongs to the class I-like SAM-binding methyltransferase superfamily. rRNA adenine N(6)-methyltransferase family. RsmA subfamily.</text>
</comment>
<gene>
    <name evidence="1" type="primary">rsmA</name>
    <name evidence="1" type="synonym">ksgA</name>
    <name type="ordered locus">CF0700</name>
</gene>
<reference key="1">
    <citation type="journal article" date="2006" name="DNA Res.">
        <title>Genome sequence of the cat pathogen, Chlamydophila felis.</title>
        <authorList>
            <person name="Azuma Y."/>
            <person name="Hirakawa H."/>
            <person name="Yamashita A."/>
            <person name="Cai Y."/>
            <person name="Rahman M.A."/>
            <person name="Suzuki H."/>
            <person name="Mitaku S."/>
            <person name="Toh H."/>
            <person name="Goto S."/>
            <person name="Murakami T."/>
            <person name="Sugi K."/>
            <person name="Hayashi H."/>
            <person name="Fukushi H."/>
            <person name="Hattori M."/>
            <person name="Kuhara S."/>
            <person name="Shirai M."/>
        </authorList>
    </citation>
    <scope>NUCLEOTIDE SEQUENCE [LARGE SCALE GENOMIC DNA]</scope>
    <source>
        <strain>Fe/C-56</strain>
    </source>
</reference>
<feature type="chain" id="PRO_0000257271" description="Ribosomal RNA small subunit methyltransferase A">
    <location>
        <begin position="1"/>
        <end position="284"/>
    </location>
</feature>
<feature type="binding site" evidence="1">
    <location>
        <position position="33"/>
    </location>
    <ligand>
        <name>S-adenosyl-L-methionine</name>
        <dbReference type="ChEBI" id="CHEBI:59789"/>
    </ligand>
</feature>
<feature type="binding site" evidence="1">
    <location>
        <position position="35"/>
    </location>
    <ligand>
        <name>S-adenosyl-L-methionine</name>
        <dbReference type="ChEBI" id="CHEBI:59789"/>
    </ligand>
</feature>
<feature type="binding site" evidence="1">
    <location>
        <position position="60"/>
    </location>
    <ligand>
        <name>S-adenosyl-L-methionine</name>
        <dbReference type="ChEBI" id="CHEBI:59789"/>
    </ligand>
</feature>
<feature type="binding site" evidence="1">
    <location>
        <position position="81"/>
    </location>
    <ligand>
        <name>S-adenosyl-L-methionine</name>
        <dbReference type="ChEBI" id="CHEBI:59789"/>
    </ligand>
</feature>
<feature type="binding site" evidence="1">
    <location>
        <position position="101"/>
    </location>
    <ligand>
        <name>S-adenosyl-L-methionine</name>
        <dbReference type="ChEBI" id="CHEBI:59789"/>
    </ligand>
</feature>
<feature type="binding site" evidence="1">
    <location>
        <position position="124"/>
    </location>
    <ligand>
        <name>S-adenosyl-L-methionine</name>
        <dbReference type="ChEBI" id="CHEBI:59789"/>
    </ligand>
</feature>
<keyword id="KW-0963">Cytoplasm</keyword>
<keyword id="KW-0489">Methyltransferase</keyword>
<keyword id="KW-0694">RNA-binding</keyword>
<keyword id="KW-0698">rRNA processing</keyword>
<keyword id="KW-0949">S-adenosyl-L-methionine</keyword>
<keyword id="KW-0808">Transferase</keyword>
<accession>Q253R6</accession>
<name>RSMA_CHLFF</name>
<sequence length="284" mass="31870">MALGDLLSRSSPDQLTRFLAQVHGHPKKGLSQNFLIDGNILRKILAVSCVEAGDWVLEIGPGFGALTEVLVNQGAHVVALEKDPMFEETLKQLPIDLEITDACKYPLSQLQEKGWQGKGRVVANLPYHITTPLLTKLFLEVPNQWKTITVMMQDEVARRITAQPGGKEYGSLTIFLQFFADVRYAFKVSSGCFFPKPQVSSAVVHMTVKDTFPLEESLHKKFFSLTRAAFGQRRKLLANALKNLYPKDLVFSALNQLNFSEKTRPETLSLDEYLKLFQLLSLNS</sequence>
<proteinExistence type="inferred from homology"/>